<dbReference type="EMBL" id="AABR03000696">
    <property type="status" value="NOT_ANNOTATED_CDS"/>
    <property type="molecule type" value="Genomic_DNA"/>
</dbReference>
<dbReference type="EMBL" id="CH473956">
    <property type="protein sequence ID" value="EDM17394.1"/>
    <property type="molecule type" value="Genomic_DNA"/>
</dbReference>
<dbReference type="RefSeq" id="NP_001102390.1">
    <property type="nucleotide sequence ID" value="NM_001108920.1"/>
</dbReference>
<dbReference type="SMR" id="D3ZJK7"/>
<dbReference type="FunCoup" id="D3ZJK7">
    <property type="interactions" value="21"/>
</dbReference>
<dbReference type="STRING" id="10116.ENSRNOP00000060687"/>
<dbReference type="GlyGen" id="D3ZJK7">
    <property type="glycosylation" value="2 sites"/>
</dbReference>
<dbReference type="PhosphoSitePlus" id="D3ZJK7"/>
<dbReference type="PaxDb" id="10116-ENSRNOP00000060687"/>
<dbReference type="Ensembl" id="ENSRNOT00000068543.2">
    <property type="protein sequence ID" value="ENSRNOP00000060687.1"/>
    <property type="gene ID" value="ENSRNOG00000019771.7"/>
</dbReference>
<dbReference type="GeneID" id="365371"/>
<dbReference type="KEGG" id="rno:365371"/>
<dbReference type="AGR" id="RGD:1307716"/>
<dbReference type="CTD" id="6911"/>
<dbReference type="RGD" id="1307716">
    <property type="gene designation" value="Tbx6"/>
</dbReference>
<dbReference type="eggNOG" id="KOG3585">
    <property type="taxonomic scope" value="Eukaryota"/>
</dbReference>
<dbReference type="GeneTree" id="ENSGT00940000160732"/>
<dbReference type="HOGENOM" id="CLU_052181_0_0_1"/>
<dbReference type="InParanoid" id="D3ZJK7"/>
<dbReference type="OMA" id="CSRHWGG"/>
<dbReference type="OrthoDB" id="7442607at2759"/>
<dbReference type="PRO" id="PR:D3ZJK7"/>
<dbReference type="Proteomes" id="UP000002494">
    <property type="component" value="Chromosome 1"/>
</dbReference>
<dbReference type="Proteomes" id="UP000234681">
    <property type="component" value="Chromosome 1"/>
</dbReference>
<dbReference type="Bgee" id="ENSRNOG00000019771">
    <property type="expression patterns" value="Expressed in thymus and 13 other cell types or tissues"/>
</dbReference>
<dbReference type="GO" id="GO:0000785">
    <property type="term" value="C:chromatin"/>
    <property type="evidence" value="ECO:0000266"/>
    <property type="project" value="RGD"/>
</dbReference>
<dbReference type="GO" id="GO:0005634">
    <property type="term" value="C:nucleus"/>
    <property type="evidence" value="ECO:0000266"/>
    <property type="project" value="RGD"/>
</dbReference>
<dbReference type="GO" id="GO:0000981">
    <property type="term" value="F:DNA-binding transcription factor activity, RNA polymerase II-specific"/>
    <property type="evidence" value="ECO:0000318"/>
    <property type="project" value="GO_Central"/>
</dbReference>
<dbReference type="GO" id="GO:0000978">
    <property type="term" value="F:RNA polymerase II cis-regulatory region sequence-specific DNA binding"/>
    <property type="evidence" value="ECO:0000266"/>
    <property type="project" value="RGD"/>
</dbReference>
<dbReference type="GO" id="GO:0061629">
    <property type="term" value="F:RNA polymerase II-specific DNA-binding transcription factor binding"/>
    <property type="evidence" value="ECO:0000266"/>
    <property type="project" value="RGD"/>
</dbReference>
<dbReference type="GO" id="GO:1990837">
    <property type="term" value="F:sequence-specific double-stranded DNA binding"/>
    <property type="evidence" value="ECO:0000266"/>
    <property type="project" value="RGD"/>
</dbReference>
<dbReference type="GO" id="GO:0001708">
    <property type="term" value="P:cell fate specification"/>
    <property type="evidence" value="ECO:0000318"/>
    <property type="project" value="GO_Central"/>
</dbReference>
<dbReference type="GO" id="GO:0001707">
    <property type="term" value="P:mesoderm formation"/>
    <property type="evidence" value="ECO:0000266"/>
    <property type="project" value="RGD"/>
</dbReference>
<dbReference type="GO" id="GO:0007501">
    <property type="term" value="P:mesodermal cell fate specification"/>
    <property type="evidence" value="ECO:0000266"/>
    <property type="project" value="RGD"/>
</dbReference>
<dbReference type="GO" id="GO:0014043">
    <property type="term" value="P:negative regulation of neuron maturation"/>
    <property type="evidence" value="ECO:0000266"/>
    <property type="project" value="RGD"/>
</dbReference>
<dbReference type="GO" id="GO:0010977">
    <property type="term" value="P:negative regulation of neuron projection development"/>
    <property type="evidence" value="ECO:0000266"/>
    <property type="project" value="RGD"/>
</dbReference>
<dbReference type="GO" id="GO:0000122">
    <property type="term" value="P:negative regulation of transcription by RNA polymerase II"/>
    <property type="evidence" value="ECO:0000266"/>
    <property type="project" value="RGD"/>
</dbReference>
<dbReference type="GO" id="GO:0045944">
    <property type="term" value="P:positive regulation of transcription by RNA polymerase II"/>
    <property type="evidence" value="ECO:0000266"/>
    <property type="project" value="RGD"/>
</dbReference>
<dbReference type="GO" id="GO:0006357">
    <property type="term" value="P:regulation of transcription by RNA polymerase II"/>
    <property type="evidence" value="ECO:0000318"/>
    <property type="project" value="GO_Central"/>
</dbReference>
<dbReference type="GO" id="GO:0023019">
    <property type="term" value="P:signal transduction involved in regulation of gene expression"/>
    <property type="evidence" value="ECO:0000266"/>
    <property type="project" value="RGD"/>
</dbReference>
<dbReference type="GO" id="GO:0032525">
    <property type="term" value="P:somite rostral/caudal axis specification"/>
    <property type="evidence" value="ECO:0000266"/>
    <property type="project" value="RGD"/>
</dbReference>
<dbReference type="CDD" id="cd20196">
    <property type="entry name" value="T-box_TBX6"/>
    <property type="match status" value="1"/>
</dbReference>
<dbReference type="FunFam" id="2.60.40.820:FF:000007">
    <property type="entry name" value="T-box transcription factor"/>
    <property type="match status" value="1"/>
</dbReference>
<dbReference type="Gene3D" id="2.60.40.820">
    <property type="entry name" value="Transcription factor, T-box"/>
    <property type="match status" value="1"/>
</dbReference>
<dbReference type="InterPro" id="IPR008967">
    <property type="entry name" value="p53-like_TF_DNA-bd_sf"/>
</dbReference>
<dbReference type="InterPro" id="IPR046360">
    <property type="entry name" value="T-box_DNA-bd"/>
</dbReference>
<dbReference type="InterPro" id="IPR036960">
    <property type="entry name" value="T-box_sf"/>
</dbReference>
<dbReference type="InterPro" id="IPR002070">
    <property type="entry name" value="TF_Brachyury"/>
</dbReference>
<dbReference type="InterPro" id="IPR001699">
    <property type="entry name" value="TF_T-box"/>
</dbReference>
<dbReference type="InterPro" id="IPR018186">
    <property type="entry name" value="TF_T-box_CS"/>
</dbReference>
<dbReference type="PANTHER" id="PTHR11267">
    <property type="entry name" value="T-BOX PROTEIN-RELATED"/>
    <property type="match status" value="1"/>
</dbReference>
<dbReference type="PANTHER" id="PTHR11267:SF100">
    <property type="entry name" value="T-BOX TRANSCRIPTION FACTOR TBX6"/>
    <property type="match status" value="1"/>
</dbReference>
<dbReference type="Pfam" id="PF00907">
    <property type="entry name" value="T-box"/>
    <property type="match status" value="1"/>
</dbReference>
<dbReference type="PRINTS" id="PR00938">
    <property type="entry name" value="BRACHYURY"/>
</dbReference>
<dbReference type="PRINTS" id="PR00937">
    <property type="entry name" value="TBOX"/>
</dbReference>
<dbReference type="SMART" id="SM00425">
    <property type="entry name" value="TBOX"/>
    <property type="match status" value="1"/>
</dbReference>
<dbReference type="SUPFAM" id="SSF49417">
    <property type="entry name" value="p53-like transcription factors"/>
    <property type="match status" value="1"/>
</dbReference>
<dbReference type="PROSITE" id="PS01283">
    <property type="entry name" value="TBOX_1"/>
    <property type="match status" value="1"/>
</dbReference>
<dbReference type="PROSITE" id="PS01264">
    <property type="entry name" value="TBOX_2"/>
    <property type="match status" value="1"/>
</dbReference>
<dbReference type="PROSITE" id="PS50252">
    <property type="entry name" value="TBOX_3"/>
    <property type="match status" value="1"/>
</dbReference>
<sequence>MYHPRELYPSLGTGYRLGHPQPGADSTFPPALTEGYRYPDLDTSKLDCFLSGIEAAPHTLAAPPPLPLLPSALGPETAPPPPEALHSLPGVSLSLENQELWKEFSAVGTEMIITKAGRRMFPACRVSVTGLDPEARYLFLLDVVPVDGARYRWQGQHWEPSGKAEPRLPDRVYIHPDSPATGAHWMRQPVSFHRVKLTNSTLDPHGHLILHSMHKYQPRIHLVRATQLCSQHWGGVASFRFPETTFISVTAYQNPRITQLKIAANPFAKGFRENGRNCKRERDARVKRKLRGPEPVATEACGSGDTPGGPCDSTLGGDIRDSDPEPAPTPQEAASASAPPCGGPSAEAYLLHPAAFHGAPSHLPARTPSFPEAPDPGRPAPYSAAFLELQPGPGSSAYQTTPSVTPFAPHFIQGAPFPLPYPGPGGYLDMGSKQMY</sequence>
<name>TBX6_RAT</name>
<reference key="1">
    <citation type="journal article" date="2004" name="Nature">
        <title>Genome sequence of the Brown Norway rat yields insights into mammalian evolution.</title>
        <authorList>
            <person name="Gibbs R.A."/>
            <person name="Weinstock G.M."/>
            <person name="Metzker M.L."/>
            <person name="Muzny D.M."/>
            <person name="Sodergren E.J."/>
            <person name="Scherer S."/>
            <person name="Scott G."/>
            <person name="Steffen D."/>
            <person name="Worley K.C."/>
            <person name="Burch P.E."/>
            <person name="Okwuonu G."/>
            <person name="Hines S."/>
            <person name="Lewis L."/>
            <person name="Deramo C."/>
            <person name="Delgado O."/>
            <person name="Dugan-Rocha S."/>
            <person name="Miner G."/>
            <person name="Morgan M."/>
            <person name="Hawes A."/>
            <person name="Gill R."/>
            <person name="Holt R.A."/>
            <person name="Adams M.D."/>
            <person name="Amanatides P.G."/>
            <person name="Baden-Tillson H."/>
            <person name="Barnstead M."/>
            <person name="Chin S."/>
            <person name="Evans C.A."/>
            <person name="Ferriera S."/>
            <person name="Fosler C."/>
            <person name="Glodek A."/>
            <person name="Gu Z."/>
            <person name="Jennings D."/>
            <person name="Kraft C.L."/>
            <person name="Nguyen T."/>
            <person name="Pfannkoch C.M."/>
            <person name="Sitter C."/>
            <person name="Sutton G.G."/>
            <person name="Venter J.C."/>
            <person name="Woodage T."/>
            <person name="Smith D."/>
            <person name="Lee H.-M."/>
            <person name="Gustafson E."/>
            <person name="Cahill P."/>
            <person name="Kana A."/>
            <person name="Doucette-Stamm L."/>
            <person name="Weinstock K."/>
            <person name="Fechtel K."/>
            <person name="Weiss R.B."/>
            <person name="Dunn D.M."/>
            <person name="Green E.D."/>
            <person name="Blakesley R.W."/>
            <person name="Bouffard G.G."/>
            <person name="De Jong P.J."/>
            <person name="Osoegawa K."/>
            <person name="Zhu B."/>
            <person name="Marra M."/>
            <person name="Schein J."/>
            <person name="Bosdet I."/>
            <person name="Fjell C."/>
            <person name="Jones S."/>
            <person name="Krzywinski M."/>
            <person name="Mathewson C."/>
            <person name="Siddiqui A."/>
            <person name="Wye N."/>
            <person name="McPherson J."/>
            <person name="Zhao S."/>
            <person name="Fraser C.M."/>
            <person name="Shetty J."/>
            <person name="Shatsman S."/>
            <person name="Geer K."/>
            <person name="Chen Y."/>
            <person name="Abramzon S."/>
            <person name="Nierman W.C."/>
            <person name="Havlak P.H."/>
            <person name="Chen R."/>
            <person name="Durbin K.J."/>
            <person name="Egan A."/>
            <person name="Ren Y."/>
            <person name="Song X.-Z."/>
            <person name="Li B."/>
            <person name="Liu Y."/>
            <person name="Qin X."/>
            <person name="Cawley S."/>
            <person name="Cooney A.J."/>
            <person name="D'Souza L.M."/>
            <person name="Martin K."/>
            <person name="Wu J.Q."/>
            <person name="Gonzalez-Garay M.L."/>
            <person name="Jackson A.R."/>
            <person name="Kalafus K.J."/>
            <person name="McLeod M.P."/>
            <person name="Milosavljevic A."/>
            <person name="Virk D."/>
            <person name="Volkov A."/>
            <person name="Wheeler D.A."/>
            <person name="Zhang Z."/>
            <person name="Bailey J.A."/>
            <person name="Eichler E.E."/>
            <person name="Tuzun E."/>
            <person name="Birney E."/>
            <person name="Mongin E."/>
            <person name="Ureta-Vidal A."/>
            <person name="Woodwark C."/>
            <person name="Zdobnov E."/>
            <person name="Bork P."/>
            <person name="Suyama M."/>
            <person name="Torrents D."/>
            <person name="Alexandersson M."/>
            <person name="Trask B.J."/>
            <person name="Young J.M."/>
            <person name="Huang H."/>
            <person name="Wang H."/>
            <person name="Xing H."/>
            <person name="Daniels S."/>
            <person name="Gietzen D."/>
            <person name="Schmidt J."/>
            <person name="Stevens K."/>
            <person name="Vitt U."/>
            <person name="Wingrove J."/>
            <person name="Camara F."/>
            <person name="Mar Alba M."/>
            <person name="Abril J.F."/>
            <person name="Guigo R."/>
            <person name="Smit A."/>
            <person name="Dubchak I."/>
            <person name="Rubin E.M."/>
            <person name="Couronne O."/>
            <person name="Poliakov A."/>
            <person name="Huebner N."/>
            <person name="Ganten D."/>
            <person name="Goesele C."/>
            <person name="Hummel O."/>
            <person name="Kreitler T."/>
            <person name="Lee Y.-A."/>
            <person name="Monti J."/>
            <person name="Schulz H."/>
            <person name="Zimdahl H."/>
            <person name="Himmelbauer H."/>
            <person name="Lehrach H."/>
            <person name="Jacob H.J."/>
            <person name="Bromberg S."/>
            <person name="Gullings-Handley J."/>
            <person name="Jensen-Seaman M.I."/>
            <person name="Kwitek A.E."/>
            <person name="Lazar J."/>
            <person name="Pasko D."/>
            <person name="Tonellato P.J."/>
            <person name="Twigger S."/>
            <person name="Ponting C.P."/>
            <person name="Duarte J.M."/>
            <person name="Rice S."/>
            <person name="Goodstadt L."/>
            <person name="Beatson S.A."/>
            <person name="Emes R.D."/>
            <person name="Winter E.E."/>
            <person name="Webber C."/>
            <person name="Brandt P."/>
            <person name="Nyakatura G."/>
            <person name="Adetobi M."/>
            <person name="Chiaromonte F."/>
            <person name="Elnitski L."/>
            <person name="Eswara P."/>
            <person name="Hardison R.C."/>
            <person name="Hou M."/>
            <person name="Kolbe D."/>
            <person name="Makova K."/>
            <person name="Miller W."/>
            <person name="Nekrutenko A."/>
            <person name="Riemer C."/>
            <person name="Schwartz S."/>
            <person name="Taylor J."/>
            <person name="Yang S."/>
            <person name="Zhang Y."/>
            <person name="Lindpaintner K."/>
            <person name="Andrews T.D."/>
            <person name="Caccamo M."/>
            <person name="Clamp M."/>
            <person name="Clarke L."/>
            <person name="Curwen V."/>
            <person name="Durbin R.M."/>
            <person name="Eyras E."/>
            <person name="Searle S.M."/>
            <person name="Cooper G.M."/>
            <person name="Batzoglou S."/>
            <person name="Brudno M."/>
            <person name="Sidow A."/>
            <person name="Stone E.A."/>
            <person name="Payseur B.A."/>
            <person name="Bourque G."/>
            <person name="Lopez-Otin C."/>
            <person name="Puente X.S."/>
            <person name="Chakrabarti K."/>
            <person name="Chatterji S."/>
            <person name="Dewey C."/>
            <person name="Pachter L."/>
            <person name="Bray N."/>
            <person name="Yap V.B."/>
            <person name="Caspi A."/>
            <person name="Tesler G."/>
            <person name="Pevzner P.A."/>
            <person name="Haussler D."/>
            <person name="Roskin K.M."/>
            <person name="Baertsch R."/>
            <person name="Clawson H."/>
            <person name="Furey T.S."/>
            <person name="Hinrichs A.S."/>
            <person name="Karolchik D."/>
            <person name="Kent W.J."/>
            <person name="Rosenbloom K.R."/>
            <person name="Trumbower H."/>
            <person name="Weirauch M."/>
            <person name="Cooper D.N."/>
            <person name="Stenson P.D."/>
            <person name="Ma B."/>
            <person name="Brent M."/>
            <person name="Arumugam M."/>
            <person name="Shteynberg D."/>
            <person name="Copley R.R."/>
            <person name="Taylor M.S."/>
            <person name="Riethman H."/>
            <person name="Mudunuri U."/>
            <person name="Peterson J."/>
            <person name="Guyer M."/>
            <person name="Felsenfeld A."/>
            <person name="Old S."/>
            <person name="Mockrin S."/>
            <person name="Collins F.S."/>
        </authorList>
    </citation>
    <scope>NUCLEOTIDE SEQUENCE [LARGE SCALE GENOMIC DNA]</scope>
    <source>
        <strain>Brown Norway</strain>
    </source>
</reference>
<reference key="2">
    <citation type="submission" date="2005-09" db="EMBL/GenBank/DDBJ databases">
        <authorList>
            <person name="Mural R.J."/>
            <person name="Adams M.D."/>
            <person name="Myers E.W."/>
            <person name="Smith H.O."/>
            <person name="Venter J.C."/>
        </authorList>
    </citation>
    <scope>NUCLEOTIDE SEQUENCE [LARGE SCALE GENOMIC DNA]</scope>
    <source>
        <strain>Brown Norway</strain>
    </source>
</reference>
<evidence type="ECO:0000250" key="1"/>
<evidence type="ECO:0000255" key="2">
    <source>
        <dbReference type="PROSITE-ProRule" id="PRU00201"/>
    </source>
</evidence>
<evidence type="ECO:0000256" key="3">
    <source>
        <dbReference type="SAM" id="MobiDB-lite"/>
    </source>
</evidence>
<proteinExistence type="inferred from homology"/>
<gene>
    <name type="primary">Tbx6</name>
</gene>
<keyword id="KW-0217">Developmental protein</keyword>
<keyword id="KW-0238">DNA-binding</keyword>
<keyword id="KW-0539">Nucleus</keyword>
<keyword id="KW-1185">Reference proteome</keyword>
<keyword id="KW-0804">Transcription</keyword>
<keyword id="KW-0805">Transcription regulation</keyword>
<protein>
    <recommendedName>
        <fullName>T-box transcription factor TBX6</fullName>
        <shortName>T-box protein 6</shortName>
    </recommendedName>
</protein>
<organism>
    <name type="scientific">Rattus norvegicus</name>
    <name type="common">Rat</name>
    <dbReference type="NCBI Taxonomy" id="10116"/>
    <lineage>
        <taxon>Eukaryota</taxon>
        <taxon>Metazoa</taxon>
        <taxon>Chordata</taxon>
        <taxon>Craniata</taxon>
        <taxon>Vertebrata</taxon>
        <taxon>Euteleostomi</taxon>
        <taxon>Mammalia</taxon>
        <taxon>Eutheria</taxon>
        <taxon>Euarchontoglires</taxon>
        <taxon>Glires</taxon>
        <taxon>Rodentia</taxon>
        <taxon>Myomorpha</taxon>
        <taxon>Muroidea</taxon>
        <taxon>Muridae</taxon>
        <taxon>Murinae</taxon>
        <taxon>Rattus</taxon>
    </lineage>
</organism>
<feature type="chain" id="PRO_0000417043" description="T-box transcription factor TBX6">
    <location>
        <begin position="1"/>
        <end position="436"/>
    </location>
</feature>
<feature type="DNA-binding region" description="T-box" evidence="2">
    <location>
        <begin position="100"/>
        <end position="273"/>
    </location>
</feature>
<feature type="region of interest" description="Disordered" evidence="3">
    <location>
        <begin position="67"/>
        <end position="87"/>
    </location>
</feature>
<feature type="region of interest" description="Disordered" evidence="3">
    <location>
        <begin position="275"/>
        <end position="344"/>
    </location>
</feature>
<feature type="region of interest" description="Disordered" evidence="3">
    <location>
        <begin position="360"/>
        <end position="383"/>
    </location>
</feature>
<feature type="compositionally biased region" description="Basic and acidic residues" evidence="3">
    <location>
        <begin position="275"/>
        <end position="284"/>
    </location>
</feature>
<feature type="compositionally biased region" description="Low complexity" evidence="3">
    <location>
        <begin position="332"/>
        <end position="344"/>
    </location>
</feature>
<accession>D3ZJK7</accession>
<comment type="function">
    <text evidence="1">T-box transcription factor that plays an essential role in the determination of the fate of axial stem cells: neural vs mesodermal. Acts in part by down-regulating, a specific enhancer (N1) of SOX2, to inhibit neural development. Seems to also play an essential role in left/right axis determination and acts through effects on Notch signaling around the node as well as through an effect on the morphology and motility of the nodal cilia (By similarity).</text>
</comment>
<comment type="subcellular location">
    <subcellularLocation>
        <location evidence="2">Nucleus</location>
    </subcellularLocation>
</comment>